<sequence>MACVNEPSPKLQKLDRNGIHGDSSPSPFFKVKKLSEKAVIPTRGSPLSAGYDLSSAVDSKVPARGKALIPTDLSIAVPEGTYARIAPRSGLAWKHSIDVGAGVIDADYRGPVGVILFNHSDADFEVKFGDRIAQLIIEKIVTPDVVEVDDLDETVRGDGGFGSTGV</sequence>
<reference key="1">
    <citation type="journal article" date="2000" name="Nature">
        <title>Sequence and analysis of chromosome 3 of the plant Arabidopsis thaliana.</title>
        <authorList>
            <person name="Salanoubat M."/>
            <person name="Lemcke K."/>
            <person name="Rieger M."/>
            <person name="Ansorge W."/>
            <person name="Unseld M."/>
            <person name="Fartmann B."/>
            <person name="Valle G."/>
            <person name="Bloecker H."/>
            <person name="Perez-Alonso M."/>
            <person name="Obermaier B."/>
            <person name="Delseny M."/>
            <person name="Boutry M."/>
            <person name="Grivell L.A."/>
            <person name="Mache R."/>
            <person name="Puigdomenech P."/>
            <person name="De Simone V."/>
            <person name="Choisne N."/>
            <person name="Artiguenave F."/>
            <person name="Robert C."/>
            <person name="Brottier P."/>
            <person name="Wincker P."/>
            <person name="Cattolico L."/>
            <person name="Weissenbach J."/>
            <person name="Saurin W."/>
            <person name="Quetier F."/>
            <person name="Schaefer M."/>
            <person name="Mueller-Auer S."/>
            <person name="Gabel C."/>
            <person name="Fuchs M."/>
            <person name="Benes V."/>
            <person name="Wurmbach E."/>
            <person name="Drzonek H."/>
            <person name="Erfle H."/>
            <person name="Jordan N."/>
            <person name="Bangert S."/>
            <person name="Wiedelmann R."/>
            <person name="Kranz H."/>
            <person name="Voss H."/>
            <person name="Holland R."/>
            <person name="Brandt P."/>
            <person name="Nyakatura G."/>
            <person name="Vezzi A."/>
            <person name="D'Angelo M."/>
            <person name="Pallavicini A."/>
            <person name="Toppo S."/>
            <person name="Simionati B."/>
            <person name="Conrad A."/>
            <person name="Hornischer K."/>
            <person name="Kauer G."/>
            <person name="Loehnert T.-H."/>
            <person name="Nordsiek G."/>
            <person name="Reichelt J."/>
            <person name="Scharfe M."/>
            <person name="Schoen O."/>
            <person name="Bargues M."/>
            <person name="Terol J."/>
            <person name="Climent J."/>
            <person name="Navarro P."/>
            <person name="Collado C."/>
            <person name="Perez-Perez A."/>
            <person name="Ottenwaelder B."/>
            <person name="Duchemin D."/>
            <person name="Cooke R."/>
            <person name="Laudie M."/>
            <person name="Berger-Llauro C."/>
            <person name="Purnelle B."/>
            <person name="Masuy D."/>
            <person name="de Haan M."/>
            <person name="Maarse A.C."/>
            <person name="Alcaraz J.-P."/>
            <person name="Cottet A."/>
            <person name="Casacuberta E."/>
            <person name="Monfort A."/>
            <person name="Argiriou A."/>
            <person name="Flores M."/>
            <person name="Liguori R."/>
            <person name="Vitale D."/>
            <person name="Mannhaupt G."/>
            <person name="Haase D."/>
            <person name="Schoof H."/>
            <person name="Rudd S."/>
            <person name="Zaccaria P."/>
            <person name="Mewes H.-W."/>
            <person name="Mayer K.F.X."/>
            <person name="Kaul S."/>
            <person name="Town C.D."/>
            <person name="Koo H.L."/>
            <person name="Tallon L.J."/>
            <person name="Jenkins J."/>
            <person name="Rooney T."/>
            <person name="Rizzo M."/>
            <person name="Walts A."/>
            <person name="Utterback T."/>
            <person name="Fujii C.Y."/>
            <person name="Shea T.P."/>
            <person name="Creasy T.H."/>
            <person name="Haas B."/>
            <person name="Maiti R."/>
            <person name="Wu D."/>
            <person name="Peterson J."/>
            <person name="Van Aken S."/>
            <person name="Pai G."/>
            <person name="Militscher J."/>
            <person name="Sellers P."/>
            <person name="Gill J.E."/>
            <person name="Feldblyum T.V."/>
            <person name="Preuss D."/>
            <person name="Lin X."/>
            <person name="Nierman W.C."/>
            <person name="Salzberg S.L."/>
            <person name="White O."/>
            <person name="Venter J.C."/>
            <person name="Fraser C.M."/>
            <person name="Kaneko T."/>
            <person name="Nakamura Y."/>
            <person name="Sato S."/>
            <person name="Kato T."/>
            <person name="Asamizu E."/>
            <person name="Sasamoto S."/>
            <person name="Kimura T."/>
            <person name="Idesawa K."/>
            <person name="Kawashima K."/>
            <person name="Kishida Y."/>
            <person name="Kiyokawa C."/>
            <person name="Kohara M."/>
            <person name="Matsumoto M."/>
            <person name="Matsuno A."/>
            <person name="Muraki A."/>
            <person name="Nakayama S."/>
            <person name="Nakazaki N."/>
            <person name="Shinpo S."/>
            <person name="Takeuchi C."/>
            <person name="Wada T."/>
            <person name="Watanabe A."/>
            <person name="Yamada M."/>
            <person name="Yasuda M."/>
            <person name="Tabata S."/>
        </authorList>
    </citation>
    <scope>NUCLEOTIDE SEQUENCE [LARGE SCALE GENOMIC DNA]</scope>
    <source>
        <strain>cv. Columbia</strain>
    </source>
</reference>
<reference key="2">
    <citation type="journal article" date="2017" name="Plant J.">
        <title>Araport11: a complete reannotation of the Arabidopsis thaliana reference genome.</title>
        <authorList>
            <person name="Cheng C.Y."/>
            <person name="Krishnakumar V."/>
            <person name="Chan A.P."/>
            <person name="Thibaud-Nissen F."/>
            <person name="Schobel S."/>
            <person name="Town C.D."/>
        </authorList>
    </citation>
    <scope>GENOME REANNOTATION</scope>
    <source>
        <strain>cv. Columbia</strain>
    </source>
</reference>
<reference key="3">
    <citation type="journal article" date="2003" name="Science">
        <title>Empirical analysis of transcriptional activity in the Arabidopsis genome.</title>
        <authorList>
            <person name="Yamada K."/>
            <person name="Lim J."/>
            <person name="Dale J.M."/>
            <person name="Chen H."/>
            <person name="Shinn P."/>
            <person name="Palm C.J."/>
            <person name="Southwick A.M."/>
            <person name="Wu H.C."/>
            <person name="Kim C.J."/>
            <person name="Nguyen M."/>
            <person name="Pham P.K."/>
            <person name="Cheuk R.F."/>
            <person name="Karlin-Newmann G."/>
            <person name="Liu S.X."/>
            <person name="Lam B."/>
            <person name="Sakano H."/>
            <person name="Wu T."/>
            <person name="Yu G."/>
            <person name="Miranda M."/>
            <person name="Quach H.L."/>
            <person name="Tripp M."/>
            <person name="Chang C.H."/>
            <person name="Lee J.M."/>
            <person name="Toriumi M.J."/>
            <person name="Chan M.M."/>
            <person name="Tang C.C."/>
            <person name="Onodera C.S."/>
            <person name="Deng J.M."/>
            <person name="Akiyama K."/>
            <person name="Ansari Y."/>
            <person name="Arakawa T."/>
            <person name="Banh J."/>
            <person name="Banno F."/>
            <person name="Bowser L."/>
            <person name="Brooks S.Y."/>
            <person name="Carninci P."/>
            <person name="Chao Q."/>
            <person name="Choy N."/>
            <person name="Enju A."/>
            <person name="Goldsmith A.D."/>
            <person name="Gurjal M."/>
            <person name="Hansen N.F."/>
            <person name="Hayashizaki Y."/>
            <person name="Johnson-Hopson C."/>
            <person name="Hsuan V.W."/>
            <person name="Iida K."/>
            <person name="Karnes M."/>
            <person name="Khan S."/>
            <person name="Koesema E."/>
            <person name="Ishida J."/>
            <person name="Jiang P.X."/>
            <person name="Jones T."/>
            <person name="Kawai J."/>
            <person name="Kamiya A."/>
            <person name="Meyers C."/>
            <person name="Nakajima M."/>
            <person name="Narusaka M."/>
            <person name="Seki M."/>
            <person name="Sakurai T."/>
            <person name="Satou M."/>
            <person name="Tamse R."/>
            <person name="Vaysberg M."/>
            <person name="Wallender E.K."/>
            <person name="Wong C."/>
            <person name="Yamamura Y."/>
            <person name="Yuan S."/>
            <person name="Shinozaki K."/>
            <person name="Davis R.W."/>
            <person name="Theologis A."/>
            <person name="Ecker J.R."/>
        </authorList>
    </citation>
    <scope>NUCLEOTIDE SEQUENCE [LARGE SCALE MRNA]</scope>
    <source>
        <strain>cv. Columbia</strain>
    </source>
</reference>
<reference key="4">
    <citation type="journal article" date="2010" name="DNA Repair">
        <title>The SOS screen in Arabidopsis: a search for functions involved in DNA metabolism.</title>
        <authorList>
            <person name="Siaud N."/>
            <person name="Dubois E."/>
            <person name="Massot S."/>
            <person name="Richaud A."/>
            <person name="Dray E."/>
            <person name="Collier J."/>
            <person name="Doutriaux M.P."/>
        </authorList>
    </citation>
    <scope>FUNCTION</scope>
</reference>
<reference key="5">
    <citation type="journal article" date="2007" name="Acta Crystallogr. F">
        <title>Purification, crystallization and preliminary crystallographic analysis of deoxyuridine triphosphate nucleotidohydrolase from Arabidopsis thaliana.</title>
        <authorList>
            <person name="Bajaj M."/>
            <person name="Moriyama H."/>
        </authorList>
    </citation>
    <scope>X-RAY CRYSTALLOGRAPHY (2.2 ANGSTROMS) IN COMPLEX WITH MAGNESIUM</scope>
    <scope>SUBUNIT</scope>
</reference>
<reference key="6">
    <citation type="submission" date="2009-02" db="PDB data bank">
        <title>Structure of dutpase from Arabidopsis thaliana.</title>
        <authorList>
            <person name="Bajaj M."/>
            <person name="Moriyama H."/>
        </authorList>
    </citation>
    <scope>X-RAY CRYSTALLOGRAPHY (2.00 ANGSTROMS)</scope>
</reference>
<proteinExistence type="evidence at protein level"/>
<comment type="function">
    <text evidence="3">This enzyme is involved in nucleotide metabolism: it produces dUMP, the immediate precursor of thymidine nucleotides and it decreases the intracellular concentration of dUTP, preventing uracil incorporation into DNA.</text>
</comment>
<comment type="catalytic activity">
    <reaction>
        <text>dUTP + H2O = dUMP + diphosphate + H(+)</text>
        <dbReference type="Rhea" id="RHEA:10248"/>
        <dbReference type="ChEBI" id="CHEBI:15377"/>
        <dbReference type="ChEBI" id="CHEBI:15378"/>
        <dbReference type="ChEBI" id="CHEBI:33019"/>
        <dbReference type="ChEBI" id="CHEBI:61555"/>
        <dbReference type="ChEBI" id="CHEBI:246422"/>
        <dbReference type="EC" id="3.6.1.23"/>
    </reaction>
</comment>
<comment type="cofactor">
    <cofactor>
        <name>Mg(2+)</name>
        <dbReference type="ChEBI" id="CHEBI:18420"/>
    </cofactor>
    <text>Binds 1 Mg(2+) per trimer.</text>
</comment>
<comment type="pathway">
    <text>Pyrimidine metabolism; dUMP biosynthesis; dUMP from dCTP (dUTP route): step 2/2.</text>
</comment>
<comment type="subunit">
    <text evidence="2">Homotrimer.</text>
</comment>
<comment type="miscellaneous">
    <text>Silencing of DUT leads to high seedling mortality and affects plant growth and flower organ morphology in surviving plants.</text>
</comment>
<comment type="similarity">
    <text evidence="4">Belongs to the dUTPase family.</text>
</comment>
<name>DUT_ARATH</name>
<organism>
    <name type="scientific">Arabidopsis thaliana</name>
    <name type="common">Mouse-ear cress</name>
    <dbReference type="NCBI Taxonomy" id="3702"/>
    <lineage>
        <taxon>Eukaryota</taxon>
        <taxon>Viridiplantae</taxon>
        <taxon>Streptophyta</taxon>
        <taxon>Embryophyta</taxon>
        <taxon>Tracheophyta</taxon>
        <taxon>Spermatophyta</taxon>
        <taxon>Magnoliopsida</taxon>
        <taxon>eudicotyledons</taxon>
        <taxon>Gunneridae</taxon>
        <taxon>Pentapetalae</taxon>
        <taxon>rosids</taxon>
        <taxon>malvids</taxon>
        <taxon>Brassicales</taxon>
        <taxon>Brassicaceae</taxon>
        <taxon>Camelineae</taxon>
        <taxon>Arabidopsis</taxon>
    </lineage>
</organism>
<protein>
    <recommendedName>
        <fullName>Deoxyuridine 5'-triphosphate nucleotidohydrolase</fullName>
        <shortName>dUTPase</shortName>
        <ecNumber>3.6.1.23</ecNumber>
    </recommendedName>
    <alternativeName>
        <fullName>dUTP pyrophosphatase</fullName>
    </alternativeName>
    <alternativeName>
        <fullName>dUTP-pyrophosphatase-like 1</fullName>
        <shortName>AtDUT1</shortName>
    </alternativeName>
</protein>
<accession>Q9STG6</accession>
<keyword id="KW-0002">3D-structure</keyword>
<keyword id="KW-0378">Hydrolase</keyword>
<keyword id="KW-0460">Magnesium</keyword>
<keyword id="KW-0479">Metal-binding</keyword>
<keyword id="KW-0546">Nucleotide metabolism</keyword>
<keyword id="KW-1185">Reference proteome</keyword>
<dbReference type="EC" id="3.6.1.23"/>
<dbReference type="EMBL" id="AL096859">
    <property type="protein sequence ID" value="CAB51171.1"/>
    <property type="molecule type" value="Genomic_DNA"/>
</dbReference>
<dbReference type="EMBL" id="CP002686">
    <property type="protein sequence ID" value="AEE78222.1"/>
    <property type="molecule type" value="Genomic_DNA"/>
</dbReference>
<dbReference type="EMBL" id="AF370334">
    <property type="protein sequence ID" value="AAK44149.1"/>
    <property type="molecule type" value="mRNA"/>
</dbReference>
<dbReference type="EMBL" id="AY062989">
    <property type="protein sequence ID" value="AAL34163.1"/>
    <property type="molecule type" value="mRNA"/>
</dbReference>
<dbReference type="PIR" id="T12954">
    <property type="entry name" value="T12954"/>
</dbReference>
<dbReference type="RefSeq" id="NP_190278.1">
    <property type="nucleotide sequence ID" value="NM_114561.4"/>
</dbReference>
<dbReference type="PDB" id="2PC5">
    <property type="method" value="X-ray"/>
    <property type="resolution" value="2.20 A"/>
    <property type="chains" value="A/B/C=1-166"/>
</dbReference>
<dbReference type="PDB" id="4OOP">
    <property type="method" value="X-ray"/>
    <property type="resolution" value="1.50 A"/>
    <property type="chains" value="A/B/C=1-166"/>
</dbReference>
<dbReference type="PDB" id="4OOQ">
    <property type="method" value="X-ray"/>
    <property type="resolution" value="2.00 A"/>
    <property type="chains" value="A/B/C=1-166"/>
</dbReference>
<dbReference type="PDBsum" id="2PC5"/>
<dbReference type="PDBsum" id="4OOP"/>
<dbReference type="PDBsum" id="4OOQ"/>
<dbReference type="SMR" id="Q9STG6"/>
<dbReference type="BioGRID" id="9167">
    <property type="interactions" value="1"/>
</dbReference>
<dbReference type="FunCoup" id="Q9STG6">
    <property type="interactions" value="3266"/>
</dbReference>
<dbReference type="STRING" id="3702.Q9STG6"/>
<dbReference type="iPTMnet" id="Q9STG6"/>
<dbReference type="PaxDb" id="3702-AT3G46940.1"/>
<dbReference type="EnsemblPlants" id="AT3G46940.1">
    <property type="protein sequence ID" value="AT3G46940.1"/>
    <property type="gene ID" value="AT3G46940"/>
</dbReference>
<dbReference type="GeneID" id="823847"/>
<dbReference type="Gramene" id="AT3G46940.1">
    <property type="protein sequence ID" value="AT3G46940.1"/>
    <property type="gene ID" value="AT3G46940"/>
</dbReference>
<dbReference type="KEGG" id="ath:AT3G46940"/>
<dbReference type="Araport" id="AT3G46940"/>
<dbReference type="TAIR" id="AT3G46940">
    <property type="gene designation" value="DUT1"/>
</dbReference>
<dbReference type="eggNOG" id="KOG3370">
    <property type="taxonomic scope" value="Eukaryota"/>
</dbReference>
<dbReference type="HOGENOM" id="CLU_068508_2_1_1"/>
<dbReference type="InParanoid" id="Q9STG6"/>
<dbReference type="PhylomeDB" id="Q9STG6"/>
<dbReference type="BioCyc" id="ARA:AT3G46940-MONOMER"/>
<dbReference type="BioCyc" id="MetaCyc:AT3G46940-MONOMER"/>
<dbReference type="BRENDA" id="3.6.1.23">
    <property type="organism ID" value="399"/>
</dbReference>
<dbReference type="UniPathway" id="UPA00610">
    <property type="reaction ID" value="UER00666"/>
</dbReference>
<dbReference type="EvolutionaryTrace" id="Q9STG6"/>
<dbReference type="PRO" id="PR:Q9STG6"/>
<dbReference type="Proteomes" id="UP000006548">
    <property type="component" value="Chromosome 3"/>
</dbReference>
<dbReference type="ExpressionAtlas" id="Q9STG6">
    <property type="expression patterns" value="baseline and differential"/>
</dbReference>
<dbReference type="GO" id="GO:0004170">
    <property type="term" value="F:dUTP diphosphatase activity"/>
    <property type="evidence" value="ECO:0007669"/>
    <property type="project" value="UniProtKB-EC"/>
</dbReference>
<dbReference type="GO" id="GO:0042802">
    <property type="term" value="F:identical protein binding"/>
    <property type="evidence" value="ECO:0000353"/>
    <property type="project" value="UniProtKB"/>
</dbReference>
<dbReference type="GO" id="GO:0000287">
    <property type="term" value="F:magnesium ion binding"/>
    <property type="evidence" value="ECO:0000314"/>
    <property type="project" value="UniProtKB"/>
</dbReference>
<dbReference type="GO" id="GO:0006281">
    <property type="term" value="P:DNA repair"/>
    <property type="evidence" value="ECO:0000315"/>
    <property type="project" value="TAIR"/>
</dbReference>
<dbReference type="GO" id="GO:0006226">
    <property type="term" value="P:dUMP biosynthetic process"/>
    <property type="evidence" value="ECO:0007669"/>
    <property type="project" value="UniProtKB-UniPathway"/>
</dbReference>
<dbReference type="GO" id="GO:0046081">
    <property type="term" value="P:dUTP catabolic process"/>
    <property type="evidence" value="ECO:0007669"/>
    <property type="project" value="InterPro"/>
</dbReference>
<dbReference type="CDD" id="cd07557">
    <property type="entry name" value="trimeric_dUTPase"/>
    <property type="match status" value="1"/>
</dbReference>
<dbReference type="FunFam" id="2.70.40.10:FF:000004">
    <property type="entry name" value="Deoxyuridine triphosphatase"/>
    <property type="match status" value="1"/>
</dbReference>
<dbReference type="Gene3D" id="2.70.40.10">
    <property type="match status" value="1"/>
</dbReference>
<dbReference type="InterPro" id="IPR008181">
    <property type="entry name" value="dUTPase"/>
</dbReference>
<dbReference type="InterPro" id="IPR029054">
    <property type="entry name" value="dUTPase-like"/>
</dbReference>
<dbReference type="InterPro" id="IPR036157">
    <property type="entry name" value="dUTPase-like_sf"/>
</dbReference>
<dbReference type="InterPro" id="IPR033704">
    <property type="entry name" value="dUTPase_trimeric"/>
</dbReference>
<dbReference type="NCBIfam" id="TIGR00576">
    <property type="entry name" value="dut"/>
    <property type="match status" value="1"/>
</dbReference>
<dbReference type="NCBIfam" id="NF001862">
    <property type="entry name" value="PRK00601.1"/>
    <property type="match status" value="1"/>
</dbReference>
<dbReference type="PANTHER" id="PTHR11241">
    <property type="entry name" value="DEOXYURIDINE 5'-TRIPHOSPHATE NUCLEOTIDOHYDROLASE"/>
    <property type="match status" value="1"/>
</dbReference>
<dbReference type="PANTHER" id="PTHR11241:SF0">
    <property type="entry name" value="DEOXYURIDINE 5'-TRIPHOSPHATE NUCLEOTIDOHYDROLASE"/>
    <property type="match status" value="1"/>
</dbReference>
<dbReference type="Pfam" id="PF00692">
    <property type="entry name" value="dUTPase"/>
    <property type="match status" value="1"/>
</dbReference>
<dbReference type="SUPFAM" id="SSF51283">
    <property type="entry name" value="dUTPase-like"/>
    <property type="match status" value="1"/>
</dbReference>
<evidence type="ECO:0000256" key="1">
    <source>
        <dbReference type="SAM" id="MobiDB-lite"/>
    </source>
</evidence>
<evidence type="ECO:0000269" key="2">
    <source>
    </source>
</evidence>
<evidence type="ECO:0000269" key="3">
    <source>
    </source>
</evidence>
<evidence type="ECO:0000305" key="4"/>
<evidence type="ECO:0007829" key="5">
    <source>
        <dbReference type="PDB" id="2PC5"/>
    </source>
</evidence>
<evidence type="ECO:0007829" key="6">
    <source>
        <dbReference type="PDB" id="4OOP"/>
    </source>
</evidence>
<feature type="chain" id="PRO_0000401366" description="Deoxyuridine 5'-triphosphate nucleotidohydrolase">
    <location>
        <begin position="1"/>
        <end position="166"/>
    </location>
</feature>
<feature type="region of interest" description="Disordered" evidence="1">
    <location>
        <begin position="1"/>
        <end position="24"/>
    </location>
</feature>
<feature type="binding site" evidence="2">
    <location>
        <position position="138"/>
    </location>
    <ligand>
        <name>Mg(2+)</name>
        <dbReference type="ChEBI" id="CHEBI:18420"/>
        <note>ligand shared between trimeric partners</note>
    </ligand>
</feature>
<feature type="strand" evidence="6">
    <location>
        <begin position="30"/>
        <end position="35"/>
    </location>
</feature>
<feature type="strand" evidence="6">
    <location>
        <begin position="42"/>
        <end position="45"/>
    </location>
</feature>
<feature type="strand" evidence="6">
    <location>
        <begin position="51"/>
        <end position="54"/>
    </location>
</feature>
<feature type="strand" evidence="6">
    <location>
        <begin position="59"/>
        <end position="61"/>
    </location>
</feature>
<feature type="strand" evidence="6">
    <location>
        <begin position="66"/>
        <end position="70"/>
    </location>
</feature>
<feature type="strand" evidence="6">
    <location>
        <begin position="73"/>
        <end position="76"/>
    </location>
</feature>
<feature type="strand" evidence="6">
    <location>
        <begin position="81"/>
        <end position="86"/>
    </location>
</feature>
<feature type="helix" evidence="6">
    <location>
        <begin position="89"/>
        <end position="95"/>
    </location>
</feature>
<feature type="strand" evidence="6">
    <location>
        <begin position="97"/>
        <end position="100"/>
    </location>
</feature>
<feature type="strand" evidence="5">
    <location>
        <begin position="103"/>
        <end position="105"/>
    </location>
</feature>
<feature type="strand" evidence="6">
    <location>
        <begin position="113"/>
        <end position="118"/>
    </location>
</feature>
<feature type="strand" evidence="6">
    <location>
        <begin position="120"/>
        <end position="122"/>
    </location>
</feature>
<feature type="strand" evidence="6">
    <location>
        <begin position="124"/>
        <end position="126"/>
    </location>
</feature>
<feature type="strand" evidence="6">
    <location>
        <begin position="131"/>
        <end position="141"/>
    </location>
</feature>
<feature type="strand" evidence="6">
    <location>
        <begin position="145"/>
        <end position="147"/>
    </location>
</feature>
<gene>
    <name type="primary">DUT</name>
    <name type="synonym">DUT1</name>
    <name type="ordered locus">At3g46940</name>
    <name type="ORF">T6H20.30</name>
</gene>